<reference key="1">
    <citation type="journal article" date="2007" name="PLoS ONE">
        <title>Molecular and structural discrimination of proline racemase and hydroxyproline-2-epimerase from nosocomial and bacterial pathogens.</title>
        <authorList>
            <person name="Goytia M."/>
            <person name="Chamond N."/>
            <person name="Cosson A."/>
            <person name="Coatnoan N."/>
            <person name="Hermant D."/>
            <person name="Berneman A."/>
            <person name="Minoprio P."/>
        </authorList>
    </citation>
    <scope>NUCLEOTIDE SEQUENCE [GENOMIC DNA]</scope>
    <scope>FUNCTION</scope>
    <scope>CATALYTIC ACTIVITY</scope>
    <scope>ACTIVITY REGULATION</scope>
    <scope>BIOPHYSICOCHEMICAL PROPERTIES</scope>
    <scope>ROLE IN VIRULENCE</scope>
    <source>
        <strain>ATCC 4325 / VPI 10463</strain>
    </source>
</reference>
<organism>
    <name type="scientific">Clostridioides difficile</name>
    <name type="common">Peptoclostridium difficile</name>
    <dbReference type="NCBI Taxonomy" id="1496"/>
    <lineage>
        <taxon>Bacteria</taxon>
        <taxon>Bacillati</taxon>
        <taxon>Bacillota</taxon>
        <taxon>Clostridia</taxon>
        <taxon>Peptostreptococcales</taxon>
        <taxon>Peptostreptococcaceae</taxon>
        <taxon>Clostridioides</taxon>
    </lineage>
</organism>
<keyword id="KW-0413">Isomerase</keyword>
<evidence type="ECO:0000250" key="1"/>
<evidence type="ECO:0000250" key="2">
    <source>
        <dbReference type="UniProtKB" id="Q4KGU2"/>
    </source>
</evidence>
<evidence type="ECO:0000269" key="3">
    <source>
    </source>
</evidence>
<evidence type="ECO:0000305" key="4"/>
<name>PRAC_CLODI</name>
<dbReference type="EC" id="5.1.1.4"/>
<dbReference type="EMBL" id="EF495346">
    <property type="protein sequence ID" value="ABS82398.1"/>
    <property type="molecule type" value="Genomic_DNA"/>
</dbReference>
<dbReference type="RefSeq" id="WP_003422090.1">
    <property type="nucleotide sequence ID" value="NZ_WUUI01000016.1"/>
</dbReference>
<dbReference type="SMR" id="A8DEZ8"/>
<dbReference type="GeneID" id="66355657"/>
<dbReference type="OMA" id="SHVLWTG"/>
<dbReference type="BRENDA" id="5.1.1.4">
    <property type="organism ID" value="1473"/>
</dbReference>
<dbReference type="GO" id="GO:0047580">
    <property type="term" value="F:4-hydroxyproline epimerase activity"/>
    <property type="evidence" value="ECO:0007669"/>
    <property type="project" value="TreeGrafter"/>
</dbReference>
<dbReference type="GO" id="GO:0018112">
    <property type="term" value="F:proline racemase activity"/>
    <property type="evidence" value="ECO:0007669"/>
    <property type="project" value="UniProtKB-EC"/>
</dbReference>
<dbReference type="FunFam" id="3.10.310.10:FF:000005">
    <property type="entry name" value="Proline racemase"/>
    <property type="match status" value="1"/>
</dbReference>
<dbReference type="Gene3D" id="3.10.310.10">
    <property type="entry name" value="Diaminopimelate Epimerase, Chain A, domain 1"/>
    <property type="match status" value="2"/>
</dbReference>
<dbReference type="InterPro" id="IPR008794">
    <property type="entry name" value="Pro_racemase_fam"/>
</dbReference>
<dbReference type="NCBIfam" id="NF010576">
    <property type="entry name" value="PRK13969.1"/>
    <property type="match status" value="1"/>
</dbReference>
<dbReference type="PANTHER" id="PTHR33442:SF5">
    <property type="entry name" value="BIFUNCTIONAL TRANS-3-HYDROXY-L-PROLINE DEHYDRATASE_2-EPIMERASE"/>
    <property type="match status" value="1"/>
</dbReference>
<dbReference type="PANTHER" id="PTHR33442">
    <property type="entry name" value="TRANS-3-HYDROXY-L-PROLINE DEHYDRATASE"/>
    <property type="match status" value="1"/>
</dbReference>
<dbReference type="Pfam" id="PF05544">
    <property type="entry name" value="Pro_racemase"/>
    <property type="match status" value="1"/>
</dbReference>
<dbReference type="PIRSF" id="PIRSF029792">
    <property type="entry name" value="Pro_racemase"/>
    <property type="match status" value="1"/>
</dbReference>
<dbReference type="SFLD" id="SFLDS00028">
    <property type="entry name" value="Proline_Racemase"/>
    <property type="match status" value="1"/>
</dbReference>
<dbReference type="SUPFAM" id="SSF54506">
    <property type="entry name" value="Diaminopimelate epimerase-like"/>
    <property type="match status" value="1"/>
</dbReference>
<comment type="function">
    <text evidence="3">Catalyzes the reversible interconversion of L- and D-proline. Plays an important role in the regulation of intra- and extracellular amino acid pools, allowing the bacterium to profit from host precursors and enzymatic pathways. Strong B-cell mitogen.</text>
</comment>
<comment type="catalytic activity">
    <reaction evidence="3">
        <text>L-proline = D-proline</text>
        <dbReference type="Rhea" id="RHEA:10680"/>
        <dbReference type="ChEBI" id="CHEBI:57726"/>
        <dbReference type="ChEBI" id="CHEBI:60039"/>
        <dbReference type="EC" id="5.1.1.4"/>
    </reaction>
</comment>
<comment type="activity regulation">
    <text evidence="3">Inhibited by pyrrole-2-carboxylic acid (PYC).</text>
</comment>
<comment type="biophysicochemical properties">
    <kinetics>
        <KM evidence="3">60.2 mM for L-proline</KM>
        <KM evidence="3">46.7 mM for D-proline</KM>
        <Vmax evidence="3">1.35 uM/sec/mg enzyme with L-proline as substrate (at 37 degrees Celsius)</Vmax>
        <Vmax evidence="3">0.85 uM/sec/mg enzyme with D-proline as substrate (at 37 degrees Celsius)</Vmax>
    </kinetics>
</comment>
<comment type="subunit">
    <text evidence="1">Homodimer.</text>
</comment>
<comment type="miscellaneous">
    <text>This enzyme does not require pyridoxal phosphate (PLP) as a cofactor.</text>
</comment>
<comment type="similarity">
    <text evidence="4">Belongs to the proline racemase family.</text>
</comment>
<accession>A8DEZ8</accession>
<sequence length="335" mass="36221">MKFSRSIQAIDSHTAGEATRIVVGGIPNIKGNSMPEKKEYLEENLDYLRTAIMLEPRGHNDMFGSVMTQPCCPDADFGIIFMDGGGYLNMCGHGTIGAMTAAIETGVVPAVEPVTHVVMEAPAGIIRGDVTVVDGKAKEVSFLNVPAFLYKEGVEVDLPGVGTVKFDISFGGSFFAIIHASQLGLKIEPQNAGKLTELAMKLRDIINEKIEIQHPTLAHIKTVDLVEIYDEPTHPEATYKNVVIFGQGQVDRSPCGTGTSAKLATLHAKGELKVGEKFVYESILGTLFKGEIVEETKVADFNAVVPKITGSAYITGFNHFVIDEEDPLKHGFILK</sequence>
<feature type="chain" id="PRO_0000354024" description="Proline racemase">
    <location>
        <begin position="1"/>
        <end position="335"/>
    </location>
</feature>
<feature type="active site" description="Proton acceptor" evidence="2">
    <location>
        <position position="91"/>
    </location>
</feature>
<feature type="active site" description="Proton donor" evidence="2">
    <location>
        <position position="255"/>
    </location>
</feature>
<proteinExistence type="evidence at protein level"/>
<protein>
    <recommendedName>
        <fullName>Proline racemase</fullName>
        <ecNumber>5.1.1.4</ecNumber>
    </recommendedName>
    <alternativeName>
        <fullName>CdPRAC</fullName>
    </alternativeName>
</protein>